<organism>
    <name type="scientific">Halobacterium salinarum (strain ATCC 29341 / DSM 671 / R1)</name>
    <dbReference type="NCBI Taxonomy" id="478009"/>
    <lineage>
        <taxon>Archaea</taxon>
        <taxon>Methanobacteriati</taxon>
        <taxon>Methanobacteriota</taxon>
        <taxon>Stenosarchaea group</taxon>
        <taxon>Halobacteria</taxon>
        <taxon>Halobacteriales</taxon>
        <taxon>Halobacteriaceae</taxon>
        <taxon>Halobacterium</taxon>
        <taxon>Halobacterium salinarum NRC-34001</taxon>
    </lineage>
</organism>
<keyword id="KW-0963">Cytoplasm</keyword>
<keyword id="KW-0255">Endonuclease</keyword>
<keyword id="KW-0378">Hydrolase</keyword>
<keyword id="KW-0540">Nuclease</keyword>
<keyword id="KW-0819">tRNA processing</keyword>
<reference key="1">
    <citation type="journal article" date="2008" name="Genomics">
        <title>Evolution in the laboratory: the genome of Halobacterium salinarum strain R1 compared to that of strain NRC-1.</title>
        <authorList>
            <person name="Pfeiffer F."/>
            <person name="Schuster S.C."/>
            <person name="Broicher A."/>
            <person name="Falb M."/>
            <person name="Palm P."/>
            <person name="Rodewald K."/>
            <person name="Ruepp A."/>
            <person name="Soppa J."/>
            <person name="Tittor J."/>
            <person name="Oesterhelt D."/>
        </authorList>
    </citation>
    <scope>NUCLEOTIDE SEQUENCE [LARGE SCALE GENOMIC DNA]</scope>
    <source>
        <strain>ATCC 29341 / DSM 671 / R1</strain>
    </source>
</reference>
<proteinExistence type="inferred from homology"/>
<sequence length="164" mass="17891">MKHLPKHVRPRWRYLAVGIEAWPDAGIERSDFQRALWFAAGNLLGDPGSADAGVRVVAYSFRDGRGEALVRARRGTVSRARAAVACVSAVREHPVRVCVRGVSGTMRAARERYLDGLDTPERRSDVAFDGDARDGVCRGENVDVVAGDDGWVGARRRDCGTDGE</sequence>
<comment type="function">
    <text evidence="1">Part of ribonuclease P, a protein complex that generates mature tRNA molecules by cleaving their 5'-ends.</text>
</comment>
<comment type="catalytic activity">
    <reaction evidence="1">
        <text>Endonucleolytic cleavage of RNA, removing 5'-extranucleotides from tRNA precursor.</text>
        <dbReference type="EC" id="3.1.26.5"/>
    </reaction>
</comment>
<comment type="subunit">
    <text evidence="1">Consists of a catalytic RNA component and at least 4-5 protein subunits.</text>
</comment>
<comment type="subcellular location">
    <subcellularLocation>
        <location evidence="1">Cytoplasm</location>
    </subcellularLocation>
</comment>
<comment type="similarity">
    <text evidence="1">Belongs to the eukaryotic/archaeal RNase P protein component 2 family.</text>
</comment>
<dbReference type="EC" id="3.1.26.5" evidence="1"/>
<dbReference type="EMBL" id="AM774415">
    <property type="protein sequence ID" value="CAP13911.1"/>
    <property type="molecule type" value="Genomic_DNA"/>
</dbReference>
<dbReference type="RefSeq" id="WP_010902926.1">
    <property type="nucleotide sequence ID" value="NC_010364.1"/>
</dbReference>
<dbReference type="SMR" id="B0R594"/>
<dbReference type="EnsemblBacteria" id="CAP13911">
    <property type="protein sequence ID" value="CAP13911"/>
    <property type="gene ID" value="OE_2832R"/>
</dbReference>
<dbReference type="KEGG" id="hsl:OE_2832R"/>
<dbReference type="HOGENOM" id="CLU_137733_0_0_2"/>
<dbReference type="Proteomes" id="UP000001321">
    <property type="component" value="Chromosome"/>
</dbReference>
<dbReference type="GO" id="GO:0005737">
    <property type="term" value="C:cytoplasm"/>
    <property type="evidence" value="ECO:0007669"/>
    <property type="project" value="UniProtKB-SubCell"/>
</dbReference>
<dbReference type="GO" id="GO:0030677">
    <property type="term" value="C:ribonuclease P complex"/>
    <property type="evidence" value="ECO:0007669"/>
    <property type="project" value="UniProtKB-UniRule"/>
</dbReference>
<dbReference type="GO" id="GO:0004526">
    <property type="term" value="F:ribonuclease P activity"/>
    <property type="evidence" value="ECO:0007669"/>
    <property type="project" value="UniProtKB-UniRule"/>
</dbReference>
<dbReference type="GO" id="GO:0001682">
    <property type="term" value="P:tRNA 5'-leader removal"/>
    <property type="evidence" value="ECO:0007669"/>
    <property type="project" value="UniProtKB-UniRule"/>
</dbReference>
<dbReference type="Gene3D" id="3.30.70.3250">
    <property type="entry name" value="Ribonuclease P, Pop5 subunit"/>
    <property type="match status" value="1"/>
</dbReference>
<dbReference type="HAMAP" id="MF_00755">
    <property type="entry name" value="RNase_P_2"/>
    <property type="match status" value="1"/>
</dbReference>
<dbReference type="InterPro" id="IPR002759">
    <property type="entry name" value="Pop5/Rpp14/Rnp2-like"/>
</dbReference>
<dbReference type="InterPro" id="IPR038085">
    <property type="entry name" value="Rnp2-like_sf"/>
</dbReference>
<dbReference type="Pfam" id="PF01900">
    <property type="entry name" value="RNase_P_Rpp14"/>
    <property type="match status" value="1"/>
</dbReference>
<dbReference type="SUPFAM" id="SSF160350">
    <property type="entry name" value="Rnp2-like"/>
    <property type="match status" value="1"/>
</dbReference>
<name>RNP2_HALS3</name>
<accession>B0R594</accession>
<gene>
    <name evidence="1" type="primary">rnp2</name>
    <name type="ordered locus">OE_2832R</name>
</gene>
<evidence type="ECO:0000255" key="1">
    <source>
        <dbReference type="HAMAP-Rule" id="MF_00755"/>
    </source>
</evidence>
<protein>
    <recommendedName>
        <fullName evidence="1">Ribonuclease P protein component 2</fullName>
        <shortName evidence="1">RNase P component 2</shortName>
        <ecNumber evidence="1">3.1.26.5</ecNumber>
    </recommendedName>
    <alternativeName>
        <fullName evidence="1">Pop5</fullName>
    </alternativeName>
</protein>
<feature type="chain" id="PRO_1000194587" description="Ribonuclease P protein component 2">
    <location>
        <begin position="1"/>
        <end position="164"/>
    </location>
</feature>